<sequence length="390" mass="43623">MPPRSLSNLSFPTEANESELVPEVWEKDFLPDSDGTTAELVIRCVIPSLYLIIISVGLLGNIMLVKIFLTNSAMRNVPNIFISNLAAGDLLLLLTCVPVDASRYFFDEWVFGKLGCKLIPAIQLTSVGVSVFTLTALSADRYRAIVNPMDMQTSGVLLWTSLKAVGIWVVSVLLAVPEAVFSEVARIGSLDNSSFTACIPYPQTDELHPKIHSVLIFLVYFLIPLVIISIYYYHIAKTLIKSAHNLPGEYNEHTKKQMETRKRLAKIVLVFVGCFVFCWFPNHVLYLYRSFNYKEIDPSLGHMIVTLVARVLSFSNSCVNPFALYLLSESFRKHFNSQLCCGRKSYPERSTSYLLSSSAVRMTSLKSNTKNVVTNSVLLNGHSTKQEIAL</sequence>
<feature type="chain" id="PRO_0000069904" description="Neuromedin-B receptor">
    <location>
        <begin position="1"/>
        <end position="390"/>
    </location>
</feature>
<feature type="topological domain" description="Extracellular" evidence="3">
    <location>
        <begin position="1"/>
        <end position="41"/>
    </location>
</feature>
<feature type="transmembrane region" description="Helical; Name=1" evidence="3">
    <location>
        <begin position="42"/>
        <end position="65"/>
    </location>
</feature>
<feature type="topological domain" description="Cytoplasmic" evidence="3">
    <location>
        <begin position="66"/>
        <end position="79"/>
    </location>
</feature>
<feature type="transmembrane region" description="Helical; Name=2" evidence="3">
    <location>
        <begin position="80"/>
        <end position="99"/>
    </location>
</feature>
<feature type="topological domain" description="Extracellular" evidence="3">
    <location>
        <begin position="100"/>
        <end position="117"/>
    </location>
</feature>
<feature type="transmembrane region" description="Helical; Name=3" evidence="3">
    <location>
        <begin position="118"/>
        <end position="139"/>
    </location>
</feature>
<feature type="topological domain" description="Cytoplasmic" evidence="3">
    <location>
        <begin position="140"/>
        <end position="156"/>
    </location>
</feature>
<feature type="transmembrane region" description="Helical; Name=4" evidence="3">
    <location>
        <begin position="157"/>
        <end position="177"/>
    </location>
</feature>
<feature type="topological domain" description="Extracellular" evidence="3">
    <location>
        <begin position="178"/>
        <end position="211"/>
    </location>
</feature>
<feature type="transmembrane region" description="Helical; Name=5" evidence="3">
    <location>
        <begin position="212"/>
        <end position="235"/>
    </location>
</feature>
<feature type="topological domain" description="Cytoplasmic" evidence="3">
    <location>
        <begin position="236"/>
        <end position="266"/>
    </location>
</feature>
<feature type="transmembrane region" description="Helical; Name=6" evidence="3">
    <location>
        <begin position="267"/>
        <end position="287"/>
    </location>
</feature>
<feature type="topological domain" description="Extracellular" evidence="3">
    <location>
        <begin position="288"/>
        <end position="299"/>
    </location>
</feature>
<feature type="transmembrane region" description="Helical; Name=7" evidence="3">
    <location>
        <begin position="300"/>
        <end position="327"/>
    </location>
</feature>
<feature type="topological domain" description="Cytoplasmic" evidence="3">
    <location>
        <begin position="328"/>
        <end position="390"/>
    </location>
</feature>
<feature type="modified residue" description="Phosphoserine" evidence="11">
    <location>
        <position position="352"/>
    </location>
</feature>
<feature type="lipid moiety-binding region" description="S-palmitoyl cysteine" evidence="1">
    <location>
        <position position="341"/>
    </location>
</feature>
<feature type="glycosylation site" description="N-linked (GlcNAc...) asparagine" evidence="3">
    <location>
        <position position="8"/>
    </location>
</feature>
<feature type="glycosylation site" description="N-linked (GlcNAc...) asparagine" evidence="3">
    <location>
        <position position="16"/>
    </location>
</feature>
<feature type="glycosylation site" description="N-linked (GlcNAc...) asparagine" evidence="3">
    <location>
        <position position="192"/>
    </location>
</feature>
<feature type="disulfide bond" evidence="4">
    <location>
        <begin position="116"/>
        <end position="198"/>
    </location>
</feature>
<organism>
    <name type="scientific">Mus musculus</name>
    <name type="common">Mouse</name>
    <dbReference type="NCBI Taxonomy" id="10090"/>
    <lineage>
        <taxon>Eukaryota</taxon>
        <taxon>Metazoa</taxon>
        <taxon>Chordata</taxon>
        <taxon>Craniata</taxon>
        <taxon>Vertebrata</taxon>
        <taxon>Euteleostomi</taxon>
        <taxon>Mammalia</taxon>
        <taxon>Eutheria</taxon>
        <taxon>Euarchontoglires</taxon>
        <taxon>Glires</taxon>
        <taxon>Rodentia</taxon>
        <taxon>Myomorpha</taxon>
        <taxon>Muroidea</taxon>
        <taxon>Muridae</taxon>
        <taxon>Murinae</taxon>
        <taxon>Mus</taxon>
        <taxon>Mus</taxon>
    </lineage>
</organism>
<comment type="function">
    <text evidence="2 5 6 7 8 9">Receptor for neuromedin-B (By similarity). Contributes to the maintenance of basal sigh rate through signaling in the pre-Botzinger complex, a cluster of several thousand neurons in the ventrolateral medulla responsible for inspiration during respiratory activity (PubMed:26855425). Contributes to the induction of sneezing following exposure to chemical irritants or allergens which causes release of NMB by nasal sensory neurons and activation of NMBR-expressing neurons in the sneeze-evoking region of the brainstem (PubMed:34133943). These in turn activate neurons of the caudal ventral respiratory group, giving rise to the sneezing response (PubMed:34133943). Contributes to induction of acute itch, possibly through its activation on dorsal root ganglion neurons by the NMB peptide (PubMed:30734045). Plays a role in the innate immune response to influenza A virus infection by enhancing interferon alpha expression and reducing expression of IL6 (PubMed:31601264). Plays a role in CSF1-induced proliferation of osteoclast precursors by contributing to the positive regulation of the expression of the CSF1 receptor CSF1R (PubMed:28780306).</text>
</comment>
<comment type="subcellular location">
    <subcellularLocation>
        <location evidence="10">Cell membrane</location>
        <topology evidence="3">Multi-pass membrane protein</topology>
    </subcellularLocation>
</comment>
<comment type="tissue specificity">
    <text evidence="5 7 8">Expressed in a subset of neurons of the pre-Botzinger complex (PubMed:26855425). Within the pre-Botzinger complex, there is some overlap with neurons expressing Grpr with some cells expressing only Grpr or Nmbr while some cells express both (PubMed:26855425). Expressed in dorsal root ganglion neurons and mast cells (PubMed:30734045). Expressed in lung (PubMed:31601264).</text>
</comment>
<comment type="developmental stage">
    <text evidence="6">During osteoclast development, expression is abundant in early osteoclast precursor cells, decreases as the cells differentiate and is almost absent in mature osteoclasts.</text>
</comment>
<comment type="induction">
    <text evidence="8">Up-regulated in lung tissue in response to infection with influenza A virus.</text>
</comment>
<comment type="disruption phenotype">
    <text evidence="5 9">Reduction in rate of basal sighing without affecting the respiratory rate (PubMed:26855425). Significantly reduced sneezing responses to chemical and allergen stimuli (PubMed:34133943).</text>
</comment>
<comment type="similarity">
    <text evidence="4">Belongs to the G-protein coupled receptor 1 family.</text>
</comment>
<evidence type="ECO:0000250" key="1">
    <source>
        <dbReference type="UniProtKB" id="P21917"/>
    </source>
</evidence>
<evidence type="ECO:0000250" key="2">
    <source>
        <dbReference type="UniProtKB" id="P24053"/>
    </source>
</evidence>
<evidence type="ECO:0000255" key="3"/>
<evidence type="ECO:0000255" key="4">
    <source>
        <dbReference type="PROSITE-ProRule" id="PRU00521"/>
    </source>
</evidence>
<evidence type="ECO:0000269" key="5">
    <source>
    </source>
</evidence>
<evidence type="ECO:0000269" key="6">
    <source>
    </source>
</evidence>
<evidence type="ECO:0000269" key="7">
    <source>
    </source>
</evidence>
<evidence type="ECO:0000269" key="8">
    <source>
    </source>
</evidence>
<evidence type="ECO:0000269" key="9">
    <source>
    </source>
</evidence>
<evidence type="ECO:0000305" key="10"/>
<evidence type="ECO:0007744" key="11">
    <source>
    </source>
</evidence>
<proteinExistence type="evidence at protein level"/>
<protein>
    <recommendedName>
        <fullName>Neuromedin-B receptor</fullName>
        <shortName>NMB-R</shortName>
    </recommendedName>
    <alternativeName>
        <fullName>Neuromedin-B-preferring bombesin receptor</fullName>
    </alternativeName>
</protein>
<accession>O54799</accession>
<reference key="1">
    <citation type="journal article" date="1997" name="Brain Res.">
        <title>Cloning and expression of the neuromedin B receptor and the third subtype of bombesin receptor genes in the mouse.</title>
        <authorList>
            <person name="Ohki-Hamazaki H."/>
            <person name="Wada E."/>
            <person name="Matsui K."/>
            <person name="Wada K."/>
        </authorList>
    </citation>
    <scope>NUCLEOTIDE SEQUENCE [GENOMIC DNA]</scope>
    <source>
        <strain>129/Sv</strain>
        <tissue>Liver</tissue>
    </source>
</reference>
<reference key="2">
    <citation type="journal article" date="2010" name="Cell">
        <title>A tissue-specific atlas of mouse protein phosphorylation and expression.</title>
        <authorList>
            <person name="Huttlin E.L."/>
            <person name="Jedrychowski M.P."/>
            <person name="Elias J.E."/>
            <person name="Goswami T."/>
            <person name="Rad R."/>
            <person name="Beausoleil S.A."/>
            <person name="Villen J."/>
            <person name="Haas W."/>
            <person name="Sowa M.E."/>
            <person name="Gygi S.P."/>
        </authorList>
    </citation>
    <scope>PHOSPHORYLATION [LARGE SCALE ANALYSIS] AT SER-352</scope>
    <scope>IDENTIFICATION BY MASS SPECTROMETRY [LARGE SCALE ANALYSIS]</scope>
    <source>
        <tissue>Brain</tissue>
    </source>
</reference>
<reference key="3">
    <citation type="journal article" date="2016" name="Nature">
        <title>The peptidergic control circuit for sighing.</title>
        <authorList>
            <person name="Li P."/>
            <person name="Janczewski W.A."/>
            <person name="Yackle K."/>
            <person name="Kam K."/>
            <person name="Pagliardini S."/>
            <person name="Krasnow M.A."/>
            <person name="Feldman J.L."/>
        </authorList>
    </citation>
    <scope>FUNCTION</scope>
    <scope>TISSUE SPECIFICITY</scope>
    <scope>DISRUPTION PHENOTYPE</scope>
</reference>
<reference key="4">
    <citation type="journal article" date="2017" name="Exp. Cell Res.">
        <title>Neuromedin B and its receptor silencing suppresses osteoclast generation by modulating precursor proliferation via M-CSF/c-Fms/D-type cyclins.</title>
        <authorList>
            <person name="Yeo C.E."/>
            <person name="Kang W.Y."/>
            <person name="Seong S.J."/>
            <person name="Cho S."/>
            <person name="Lee H.W."/>
            <person name="Yoon Y.R."/>
            <person name="Kim H.J."/>
        </authorList>
    </citation>
    <scope>FUNCTION</scope>
    <scope>DEVELOPMENTAL STAGE</scope>
</reference>
<reference key="5">
    <citation type="journal article" date="2019" name="Acta Derm. Venereol.">
        <title>Neuromedin B Induces Acute Itch in Mice via the Activation of Peripheral Sensory Neurons.</title>
        <authorList>
            <person name="Ehling S."/>
            <person name="Fukuyama T."/>
            <person name="Ko M.C."/>
            <person name="Olivry T."/>
            <person name="Baeumer W."/>
        </authorList>
    </citation>
    <scope>FUNCTION</scope>
    <scope>TISSUE SPECIFICITY</scope>
</reference>
<reference key="6">
    <citation type="journal article" date="2019" name="Vet. Res.">
        <title>Role of neuromedin B and its receptor in the innate immune responses against influenza A virus infection in vitro and in vivo.</title>
        <authorList>
            <person name="Yang G."/>
            <person name="Huang H."/>
            <person name="Tang M."/>
            <person name="Cai Z."/>
            <person name="Huang C."/>
            <person name="Qi B."/>
            <person name="Chen J.L."/>
        </authorList>
    </citation>
    <scope>FUNCTION</scope>
    <scope>TISSUE SPECIFICITY</scope>
    <scope>INDUCTION</scope>
</reference>
<reference key="7">
    <citation type="journal article" date="2021" name="Cell">
        <title>Sneezing reflex is mediated by a peptidergic pathway from nose to brainstem.</title>
        <authorList>
            <person name="Li F."/>
            <person name="Jiang H."/>
            <person name="Shen X."/>
            <person name="Yang W."/>
            <person name="Guo C."/>
            <person name="Wang Z."/>
            <person name="Xiao M."/>
            <person name="Cui L."/>
            <person name="Luo W."/>
            <person name="Kim B.S."/>
            <person name="Chen Z."/>
            <person name="Huang A.J.W."/>
            <person name="Liu Q."/>
        </authorList>
    </citation>
    <scope>FUNCTION</scope>
    <scope>DISRUPTION PHENOTYPE</scope>
</reference>
<dbReference type="EMBL" id="AB010281">
    <property type="protein sequence ID" value="BAA24405.1"/>
    <property type="molecule type" value="Genomic_DNA"/>
</dbReference>
<dbReference type="CCDS" id="CCDS23707.1"/>
<dbReference type="RefSeq" id="NP_032729.1">
    <property type="nucleotide sequence ID" value="NM_008703.3"/>
</dbReference>
<dbReference type="SMR" id="O54799"/>
<dbReference type="FunCoup" id="O54799">
    <property type="interactions" value="816"/>
</dbReference>
<dbReference type="STRING" id="10090.ENSMUSP00000020015"/>
<dbReference type="GlyCosmos" id="O54799">
    <property type="glycosylation" value="3 sites, No reported glycans"/>
</dbReference>
<dbReference type="GlyGen" id="O54799">
    <property type="glycosylation" value="3 sites"/>
</dbReference>
<dbReference type="iPTMnet" id="O54799"/>
<dbReference type="PhosphoSitePlus" id="O54799"/>
<dbReference type="jPOST" id="O54799"/>
<dbReference type="PaxDb" id="10090-ENSMUSP00000020015"/>
<dbReference type="ProteomicsDB" id="252972"/>
<dbReference type="Antibodypedia" id="19807">
    <property type="antibodies" value="284 antibodies from 29 providers"/>
</dbReference>
<dbReference type="DNASU" id="18101"/>
<dbReference type="Ensembl" id="ENSMUST00000020015.10">
    <property type="protein sequence ID" value="ENSMUSP00000020015.4"/>
    <property type="gene ID" value="ENSMUSG00000019865.10"/>
</dbReference>
<dbReference type="GeneID" id="18101"/>
<dbReference type="KEGG" id="mmu:18101"/>
<dbReference type="UCSC" id="uc007elp.1">
    <property type="organism name" value="mouse"/>
</dbReference>
<dbReference type="AGR" id="MGI:1100525"/>
<dbReference type="CTD" id="4829"/>
<dbReference type="MGI" id="MGI:1100525">
    <property type="gene designation" value="Nmbr"/>
</dbReference>
<dbReference type="VEuPathDB" id="HostDB:ENSMUSG00000019865"/>
<dbReference type="eggNOG" id="KOG3656">
    <property type="taxonomic scope" value="Eukaryota"/>
</dbReference>
<dbReference type="GeneTree" id="ENSGT01120000271837"/>
<dbReference type="HOGENOM" id="CLU_009579_6_2_1"/>
<dbReference type="InParanoid" id="O54799"/>
<dbReference type="OMA" id="GWERDFL"/>
<dbReference type="OrthoDB" id="10049706at2759"/>
<dbReference type="PhylomeDB" id="O54799"/>
<dbReference type="TreeFam" id="TF331292"/>
<dbReference type="Reactome" id="R-MMU-375276">
    <property type="pathway name" value="Peptide ligand-binding receptors"/>
</dbReference>
<dbReference type="Reactome" id="R-MMU-416476">
    <property type="pathway name" value="G alpha (q) signalling events"/>
</dbReference>
<dbReference type="BioGRID-ORCS" id="18101">
    <property type="hits" value="2 hits in 76 CRISPR screens"/>
</dbReference>
<dbReference type="PRO" id="PR:O54799"/>
<dbReference type="Proteomes" id="UP000000589">
    <property type="component" value="Chromosome 10"/>
</dbReference>
<dbReference type="RNAct" id="O54799">
    <property type="molecule type" value="protein"/>
</dbReference>
<dbReference type="Bgee" id="ENSMUSG00000019865">
    <property type="expression patterns" value="Expressed in spermatocyte and 56 other cell types or tissues"/>
</dbReference>
<dbReference type="ExpressionAtlas" id="O54799">
    <property type="expression patterns" value="baseline and differential"/>
</dbReference>
<dbReference type="GO" id="GO:0005829">
    <property type="term" value="C:cytosol"/>
    <property type="evidence" value="ECO:0007669"/>
    <property type="project" value="Ensembl"/>
</dbReference>
<dbReference type="GO" id="GO:0005886">
    <property type="term" value="C:plasma membrane"/>
    <property type="evidence" value="ECO:0007669"/>
    <property type="project" value="UniProtKB-SubCell"/>
</dbReference>
<dbReference type="GO" id="GO:0004946">
    <property type="term" value="F:bombesin receptor activity"/>
    <property type="evidence" value="ECO:0007669"/>
    <property type="project" value="InterPro"/>
</dbReference>
<dbReference type="GO" id="GO:0140374">
    <property type="term" value="P:antiviral innate immune response"/>
    <property type="evidence" value="ECO:0000315"/>
    <property type="project" value="UniProtKB"/>
</dbReference>
<dbReference type="GO" id="GO:0032715">
    <property type="term" value="P:negative regulation of interleukin-6 production"/>
    <property type="evidence" value="ECO:0000315"/>
    <property type="project" value="UniProtKB"/>
</dbReference>
<dbReference type="GO" id="GO:0032727">
    <property type="term" value="P:positive regulation of interferon-alpha production"/>
    <property type="evidence" value="ECO:0007669"/>
    <property type="project" value="Ensembl"/>
</dbReference>
<dbReference type="GO" id="GO:0090290">
    <property type="term" value="P:positive regulation of osteoclast proliferation"/>
    <property type="evidence" value="ECO:0000315"/>
    <property type="project" value="UniProtKB"/>
</dbReference>
<dbReference type="GO" id="GO:1903942">
    <property type="term" value="P:positive regulation of respiratory gaseous exchange"/>
    <property type="evidence" value="ECO:0000315"/>
    <property type="project" value="UniProtKB"/>
</dbReference>
<dbReference type="GO" id="GO:0160023">
    <property type="term" value="P:sneeze reflex"/>
    <property type="evidence" value="ECO:0000315"/>
    <property type="project" value="UniProtKB"/>
</dbReference>
<dbReference type="FunFam" id="1.20.1070.10:FF:000132">
    <property type="entry name" value="Neuromedin-B receptor"/>
    <property type="match status" value="1"/>
</dbReference>
<dbReference type="Gene3D" id="1.20.1070.10">
    <property type="entry name" value="Rhodopsin 7-helix transmembrane proteins"/>
    <property type="match status" value="1"/>
</dbReference>
<dbReference type="InterPro" id="IPR001556">
    <property type="entry name" value="Bombsn_rcpt-like"/>
</dbReference>
<dbReference type="InterPro" id="IPR000276">
    <property type="entry name" value="GPCR_Rhodpsn"/>
</dbReference>
<dbReference type="InterPro" id="IPR017452">
    <property type="entry name" value="GPCR_Rhodpsn_7TM"/>
</dbReference>
<dbReference type="InterPro" id="IPR001642">
    <property type="entry name" value="NeuroB_rcpt"/>
</dbReference>
<dbReference type="PANTHER" id="PTHR45695">
    <property type="entry name" value="LEUCOKININ RECEPTOR-RELATED"/>
    <property type="match status" value="1"/>
</dbReference>
<dbReference type="PANTHER" id="PTHR45695:SF8">
    <property type="entry name" value="NEUROMEDIN-B RECEPTOR"/>
    <property type="match status" value="1"/>
</dbReference>
<dbReference type="Pfam" id="PF00001">
    <property type="entry name" value="7tm_1"/>
    <property type="match status" value="1"/>
</dbReference>
<dbReference type="PRINTS" id="PR00358">
    <property type="entry name" value="BOMBESINR"/>
</dbReference>
<dbReference type="PRINTS" id="PR00237">
    <property type="entry name" value="GPCRRHODOPSN"/>
</dbReference>
<dbReference type="PRINTS" id="PR00639">
    <property type="entry name" value="NEUROMEDINBR"/>
</dbReference>
<dbReference type="SMART" id="SM01381">
    <property type="entry name" value="7TM_GPCR_Srsx"/>
    <property type="match status" value="1"/>
</dbReference>
<dbReference type="SUPFAM" id="SSF81321">
    <property type="entry name" value="Family A G protein-coupled receptor-like"/>
    <property type="match status" value="1"/>
</dbReference>
<dbReference type="PROSITE" id="PS00237">
    <property type="entry name" value="G_PROTEIN_RECEP_F1_1"/>
    <property type="match status" value="1"/>
</dbReference>
<dbReference type="PROSITE" id="PS50262">
    <property type="entry name" value="G_PROTEIN_RECEP_F1_2"/>
    <property type="match status" value="1"/>
</dbReference>
<name>NMBR_MOUSE</name>
<keyword id="KW-1003">Cell membrane</keyword>
<keyword id="KW-1015">Disulfide bond</keyword>
<keyword id="KW-0297">G-protein coupled receptor</keyword>
<keyword id="KW-0325">Glycoprotein</keyword>
<keyword id="KW-0449">Lipoprotein</keyword>
<keyword id="KW-0472">Membrane</keyword>
<keyword id="KW-0564">Palmitate</keyword>
<keyword id="KW-0597">Phosphoprotein</keyword>
<keyword id="KW-0675">Receptor</keyword>
<keyword id="KW-1185">Reference proteome</keyword>
<keyword id="KW-0807">Transducer</keyword>
<keyword id="KW-0812">Transmembrane</keyword>
<keyword id="KW-1133">Transmembrane helix</keyword>
<gene>
    <name type="primary">Nmbr</name>
</gene>